<keyword id="KW-0143">Chaperone</keyword>
<keyword id="KW-0963">Cytoplasm</keyword>
<keyword id="KW-0488">Methylation</keyword>
<keyword id="KW-0539">Nucleus</keyword>
<keyword id="KW-0597">Phosphoprotein</keyword>
<keyword id="KW-1185">Reference proteome</keyword>
<keyword id="KW-0346">Stress response</keyword>
<accession>Q5EAC9</accession>
<accession>Q3T0Q5</accession>
<dbReference type="EMBL" id="BT020640">
    <property type="protein sequence ID" value="AAX08657.1"/>
    <property type="molecule type" value="mRNA"/>
</dbReference>
<dbReference type="EMBL" id="BC102299">
    <property type="protein sequence ID" value="AAI02300.1"/>
    <property type="molecule type" value="mRNA"/>
</dbReference>
<dbReference type="RefSeq" id="NP_001014955.1">
    <property type="nucleotide sequence ID" value="NM_001014955.1"/>
</dbReference>
<dbReference type="SMR" id="Q5EAC9"/>
<dbReference type="FunCoup" id="Q5EAC9">
    <property type="interactions" value="53"/>
</dbReference>
<dbReference type="STRING" id="9913.ENSBTAP00000001720"/>
<dbReference type="PaxDb" id="9913-ENSBTAP00000001720"/>
<dbReference type="Ensembl" id="ENSBTAT00000001720.3">
    <property type="protein sequence ID" value="ENSBTAP00000001720.2"/>
    <property type="gene ID" value="ENSBTAG00000001303.3"/>
</dbReference>
<dbReference type="GeneID" id="539524"/>
<dbReference type="KEGG" id="bta:539524"/>
<dbReference type="CTD" id="26353"/>
<dbReference type="VEuPathDB" id="HostDB:ENSBTAG00000001303"/>
<dbReference type="VGNC" id="VGNC:53907">
    <property type="gene designation" value="HSPB8"/>
</dbReference>
<dbReference type="eggNOG" id="KOG3591">
    <property type="taxonomic scope" value="Eukaryota"/>
</dbReference>
<dbReference type="GeneTree" id="ENSGT00940000160605"/>
<dbReference type="HOGENOM" id="CLU_095001_0_1_1"/>
<dbReference type="InParanoid" id="Q5EAC9"/>
<dbReference type="OMA" id="PCHYPSR"/>
<dbReference type="OrthoDB" id="10060792at2759"/>
<dbReference type="TreeFam" id="TF105049"/>
<dbReference type="Reactome" id="R-BTA-3371571">
    <property type="pathway name" value="HSF1-dependent transactivation"/>
</dbReference>
<dbReference type="Proteomes" id="UP000009136">
    <property type="component" value="Chromosome 17"/>
</dbReference>
<dbReference type="Bgee" id="ENSBTAG00000001303">
    <property type="expression patterns" value="Expressed in biceps femoris and 104 other cell types or tissues"/>
</dbReference>
<dbReference type="GO" id="GO:0005737">
    <property type="term" value="C:cytoplasm"/>
    <property type="evidence" value="ECO:0000250"/>
    <property type="project" value="UniProtKB"/>
</dbReference>
<dbReference type="GO" id="GO:0005829">
    <property type="term" value="C:cytosol"/>
    <property type="evidence" value="ECO:0007669"/>
    <property type="project" value="Ensembl"/>
</dbReference>
<dbReference type="GO" id="GO:0005654">
    <property type="term" value="C:nucleoplasm"/>
    <property type="evidence" value="ECO:0007669"/>
    <property type="project" value="Ensembl"/>
</dbReference>
<dbReference type="GO" id="GO:0005634">
    <property type="term" value="C:nucleus"/>
    <property type="evidence" value="ECO:0000250"/>
    <property type="project" value="UniProtKB"/>
</dbReference>
<dbReference type="GO" id="GO:0101031">
    <property type="term" value="C:protein folding chaperone complex"/>
    <property type="evidence" value="ECO:0000318"/>
    <property type="project" value="GO_Central"/>
</dbReference>
<dbReference type="GO" id="GO:0042803">
    <property type="term" value="F:protein homodimerization activity"/>
    <property type="evidence" value="ECO:0007669"/>
    <property type="project" value="Ensembl"/>
</dbReference>
<dbReference type="GO" id="GO:0034620">
    <property type="term" value="P:cellular response to unfolded protein"/>
    <property type="evidence" value="ECO:0000318"/>
    <property type="project" value="GO_Central"/>
</dbReference>
<dbReference type="GO" id="GO:1905337">
    <property type="term" value="P:positive regulation of aggrephagy"/>
    <property type="evidence" value="ECO:0007669"/>
    <property type="project" value="Ensembl"/>
</dbReference>
<dbReference type="CDD" id="cd06480">
    <property type="entry name" value="ACD_HspB8_like"/>
    <property type="match status" value="1"/>
</dbReference>
<dbReference type="FunFam" id="2.60.40.790:FF:000028">
    <property type="entry name" value="Heat shock protein beta-8"/>
    <property type="match status" value="1"/>
</dbReference>
<dbReference type="Gene3D" id="2.60.40.790">
    <property type="match status" value="1"/>
</dbReference>
<dbReference type="InterPro" id="IPR002068">
    <property type="entry name" value="A-crystallin/Hsp20_dom"/>
</dbReference>
<dbReference type="InterPro" id="IPR001436">
    <property type="entry name" value="Alpha-crystallin/sHSP_animal"/>
</dbReference>
<dbReference type="InterPro" id="IPR008978">
    <property type="entry name" value="HSP20-like_chaperone"/>
</dbReference>
<dbReference type="InterPro" id="IPR043254">
    <property type="entry name" value="HSPB8"/>
</dbReference>
<dbReference type="InterPro" id="IPR042790">
    <property type="entry name" value="HspB8_ACD"/>
</dbReference>
<dbReference type="PANTHER" id="PTHR46906">
    <property type="entry name" value="HEAT SHOCK PROTEIN BETA-8"/>
    <property type="match status" value="1"/>
</dbReference>
<dbReference type="PANTHER" id="PTHR46906:SF1">
    <property type="entry name" value="HEAT SHOCK PROTEIN BETA-8"/>
    <property type="match status" value="1"/>
</dbReference>
<dbReference type="Pfam" id="PF00011">
    <property type="entry name" value="HSP20"/>
    <property type="match status" value="1"/>
</dbReference>
<dbReference type="PRINTS" id="PR00299">
    <property type="entry name" value="ACRYSTALLIN"/>
</dbReference>
<dbReference type="SUPFAM" id="SSF49764">
    <property type="entry name" value="HSP20-like chaperones"/>
    <property type="match status" value="1"/>
</dbReference>
<dbReference type="PROSITE" id="PS01031">
    <property type="entry name" value="SHSP"/>
    <property type="match status" value="1"/>
</dbReference>
<comment type="function">
    <text evidence="3">Involved in the chaperone-assisted selective autophagy (CASA), a crucial process for protein quality control, particularly in mechanical strained cells and tissues such as muscle. Displays temperature-dependent chaperone activity.</text>
</comment>
<comment type="subunit">
    <text evidence="3 4">Monomer (By similarity). Forms a ternary complex with BAG3 and HSPA1A (By similarity). Component of the chaperone-assisted selective autophagy (CASA) complex consisting of BAG3, HSPA8/HSC70, HSPB8 and STUB1/CHIP (By similarity). Interacts with HSPB1 (By similarity). Interacts with DNAJB6 (By similarity). Interacts with BAG3 (By similarity).</text>
</comment>
<comment type="subcellular location">
    <subcellularLocation>
        <location evidence="4">Cytoplasm</location>
    </subcellularLocation>
    <subcellularLocation>
        <location evidence="4">Nucleus</location>
    </subcellularLocation>
    <text evidence="4">Translocates to nuclear foci during heat shock.</text>
</comment>
<comment type="PTM">
    <text evidence="1">Phosphorylated.</text>
</comment>
<comment type="similarity">
    <text evidence="5">Belongs to the small heat shock protein (HSP20) family.</text>
</comment>
<organism>
    <name type="scientific">Bos taurus</name>
    <name type="common">Bovine</name>
    <dbReference type="NCBI Taxonomy" id="9913"/>
    <lineage>
        <taxon>Eukaryota</taxon>
        <taxon>Metazoa</taxon>
        <taxon>Chordata</taxon>
        <taxon>Craniata</taxon>
        <taxon>Vertebrata</taxon>
        <taxon>Euteleostomi</taxon>
        <taxon>Mammalia</taxon>
        <taxon>Eutheria</taxon>
        <taxon>Laurasiatheria</taxon>
        <taxon>Artiodactyla</taxon>
        <taxon>Ruminantia</taxon>
        <taxon>Pecora</taxon>
        <taxon>Bovidae</taxon>
        <taxon>Bovinae</taxon>
        <taxon>Bos</taxon>
    </lineage>
</organism>
<evidence type="ECO:0000250" key="1"/>
<evidence type="ECO:0000250" key="2">
    <source>
        <dbReference type="UniProtKB" id="Q9EPX0"/>
    </source>
</evidence>
<evidence type="ECO:0000250" key="3">
    <source>
        <dbReference type="UniProtKB" id="Q9JK92"/>
    </source>
</evidence>
<evidence type="ECO:0000250" key="4">
    <source>
        <dbReference type="UniProtKB" id="Q9UJY1"/>
    </source>
</evidence>
<evidence type="ECO:0000255" key="5">
    <source>
        <dbReference type="PROSITE-ProRule" id="PRU00285"/>
    </source>
</evidence>
<evidence type="ECO:0000256" key="6">
    <source>
        <dbReference type="SAM" id="MobiDB-lite"/>
    </source>
</evidence>
<name>HSPB8_BOVIN</name>
<protein>
    <recommendedName>
        <fullName>Heat shock protein beta-8</fullName>
        <shortName>HspB8</shortName>
    </recommendedName>
</protein>
<proteinExistence type="evidence at transcript level"/>
<reference key="1">
    <citation type="journal article" date="2005" name="BMC Genomics">
        <title>Characterization of 954 bovine full-CDS cDNA sequences.</title>
        <authorList>
            <person name="Harhay G.P."/>
            <person name="Sonstegard T.S."/>
            <person name="Keele J.W."/>
            <person name="Heaton M.P."/>
            <person name="Clawson M.L."/>
            <person name="Snelling W.M."/>
            <person name="Wiedmann R.T."/>
            <person name="Van Tassell C.P."/>
            <person name="Smith T.P.L."/>
        </authorList>
    </citation>
    <scope>NUCLEOTIDE SEQUENCE [LARGE SCALE MRNA]</scope>
</reference>
<reference key="2">
    <citation type="submission" date="2005-08" db="EMBL/GenBank/DDBJ databases">
        <authorList>
            <consortium name="NIH - Mammalian Gene Collection (MGC) project"/>
        </authorList>
    </citation>
    <scope>NUCLEOTIDE SEQUENCE [LARGE SCALE MRNA]</scope>
    <source>
        <strain>Crossbred X Angus</strain>
        <tissue>Ileum</tissue>
    </source>
</reference>
<feature type="chain" id="PRO_0000125944" description="Heat shock protein beta-8">
    <location>
        <begin position="1"/>
        <end position="196"/>
    </location>
</feature>
<feature type="domain" description="sHSP" evidence="5">
    <location>
        <begin position="74"/>
        <end position="185"/>
    </location>
</feature>
<feature type="region of interest" description="Disordered" evidence="6">
    <location>
        <begin position="1"/>
        <end position="34"/>
    </location>
</feature>
<feature type="region of interest" description="Disordered" evidence="6">
    <location>
        <begin position="176"/>
        <end position="196"/>
    </location>
</feature>
<feature type="compositionally biased region" description="Low complexity" evidence="6">
    <location>
        <begin position="23"/>
        <end position="34"/>
    </location>
</feature>
<feature type="compositionally biased region" description="Polar residues" evidence="6">
    <location>
        <begin position="178"/>
        <end position="196"/>
    </location>
</feature>
<feature type="modified residue" description="Phosphoserine" evidence="4">
    <location>
        <position position="24"/>
    </location>
</feature>
<feature type="modified residue" description="Phosphoserine" evidence="2">
    <location>
        <position position="57"/>
    </location>
</feature>
<feature type="modified residue" description="Phosphothreonine" evidence="4">
    <location>
        <position position="63"/>
    </location>
</feature>
<feature type="modified residue" description="Asymmetric dimethylarginine" evidence="3">
    <location>
        <position position="71"/>
    </location>
</feature>
<feature type="modified residue" description="Asymmetric dimethylarginine" evidence="3">
    <location>
        <position position="78"/>
    </location>
</feature>
<feature type="modified residue" description="Phosphoserine" evidence="3">
    <location>
        <position position="87"/>
    </location>
</feature>
<sequence>MADGQMPFPCHYTSRRRRDPFRDSPLSSRLLDDGFGMDPFPDDLTASWPDWALPRLSSAWPGTLRSGMVPRGPTAMTRFGVPAEGRSPPPFPGEPWKVCVNVHSFKPEELMVKTKDGYVEVSGKHEEKQQEGGIVSKNFTKKIQLPAEVDPVTVFASLSPEGLLIIEAPQVPPYSPFGESSFNNELPQDGQEVTCT</sequence>
<gene>
    <name type="primary">HSPB8</name>
</gene>